<accession>Q58857</accession>
<reference key="1">
    <citation type="journal article" date="1996" name="Science">
        <title>Complete genome sequence of the methanogenic archaeon, Methanococcus jannaschii.</title>
        <authorList>
            <person name="Bult C.J."/>
            <person name="White O."/>
            <person name="Olsen G.J."/>
            <person name="Zhou L."/>
            <person name="Fleischmann R.D."/>
            <person name="Sutton G.G."/>
            <person name="Blake J.A."/>
            <person name="FitzGerald L.M."/>
            <person name="Clayton R.A."/>
            <person name="Gocayne J.D."/>
            <person name="Kerlavage A.R."/>
            <person name="Dougherty B.A."/>
            <person name="Tomb J.-F."/>
            <person name="Adams M.D."/>
            <person name="Reich C.I."/>
            <person name="Overbeek R."/>
            <person name="Kirkness E.F."/>
            <person name="Weinstock K.G."/>
            <person name="Merrick J.M."/>
            <person name="Glodek A."/>
            <person name="Scott J.L."/>
            <person name="Geoghagen N.S.M."/>
            <person name="Weidman J.F."/>
            <person name="Fuhrmann J.L."/>
            <person name="Nguyen D."/>
            <person name="Utterback T.R."/>
            <person name="Kelley J.M."/>
            <person name="Peterson J.D."/>
            <person name="Sadow P.W."/>
            <person name="Hanna M.C."/>
            <person name="Cotton M.D."/>
            <person name="Roberts K.M."/>
            <person name="Hurst M.A."/>
            <person name="Kaine B.P."/>
            <person name="Borodovsky M."/>
            <person name="Klenk H.-P."/>
            <person name="Fraser C.M."/>
            <person name="Smith H.O."/>
            <person name="Woese C.R."/>
            <person name="Venter J.C."/>
        </authorList>
    </citation>
    <scope>NUCLEOTIDE SEQUENCE [LARGE SCALE GENOMIC DNA]</scope>
    <source>
        <strain>ATCC 43067 / DSM 2661 / JAL-1 / JCM 10045 / NBRC 100440</strain>
    </source>
</reference>
<keyword id="KW-1185">Reference proteome</keyword>
<sequence>MMIYGILLNIPEKHATKYEDLIRRIIGEGIARGDILSFTEARYKGDVAFVMLARSRRAAEKVYQQLKEHPIHVKVIEIEGKGD</sequence>
<feature type="chain" id="PRO_0000107351" description="Uncharacterized protein MJ1462">
    <location>
        <begin position="1"/>
        <end position="83"/>
    </location>
</feature>
<organism>
    <name type="scientific">Methanocaldococcus jannaschii (strain ATCC 43067 / DSM 2661 / JAL-1 / JCM 10045 / NBRC 100440)</name>
    <name type="common">Methanococcus jannaschii</name>
    <dbReference type="NCBI Taxonomy" id="243232"/>
    <lineage>
        <taxon>Archaea</taxon>
        <taxon>Methanobacteriati</taxon>
        <taxon>Methanobacteriota</taxon>
        <taxon>Methanomada group</taxon>
        <taxon>Methanococci</taxon>
        <taxon>Methanococcales</taxon>
        <taxon>Methanocaldococcaceae</taxon>
        <taxon>Methanocaldococcus</taxon>
    </lineage>
</organism>
<dbReference type="EMBL" id="L77117">
    <property type="protein sequence ID" value="AAB99476.1"/>
    <property type="molecule type" value="Genomic_DNA"/>
</dbReference>
<dbReference type="PIR" id="E64482">
    <property type="entry name" value="E64482"/>
</dbReference>
<dbReference type="SMR" id="Q58857"/>
<dbReference type="STRING" id="243232.MJ_1462"/>
<dbReference type="PaxDb" id="243232-MJ_1462"/>
<dbReference type="EnsemblBacteria" id="AAB99476">
    <property type="protein sequence ID" value="AAB99476"/>
    <property type="gene ID" value="MJ_1462"/>
</dbReference>
<dbReference type="KEGG" id="mja:MJ_1462"/>
<dbReference type="eggNOG" id="arCOG08274">
    <property type="taxonomic scope" value="Archaea"/>
</dbReference>
<dbReference type="HOGENOM" id="CLU_2565887_0_0_2"/>
<dbReference type="InParanoid" id="Q58857"/>
<dbReference type="Proteomes" id="UP000000805">
    <property type="component" value="Chromosome"/>
</dbReference>
<name>Y1462_METJA</name>
<gene>
    <name type="ordered locus">MJ1462</name>
</gene>
<protein>
    <recommendedName>
        <fullName>Uncharacterized protein MJ1462</fullName>
    </recommendedName>
</protein>
<proteinExistence type="predicted"/>